<reference key="1">
    <citation type="journal article" date="2005" name="Science">
        <title>The transcriptional landscape of the mammalian genome.</title>
        <authorList>
            <person name="Carninci P."/>
            <person name="Kasukawa T."/>
            <person name="Katayama S."/>
            <person name="Gough J."/>
            <person name="Frith M.C."/>
            <person name="Maeda N."/>
            <person name="Oyama R."/>
            <person name="Ravasi T."/>
            <person name="Lenhard B."/>
            <person name="Wells C."/>
            <person name="Kodzius R."/>
            <person name="Shimokawa K."/>
            <person name="Bajic V.B."/>
            <person name="Brenner S.E."/>
            <person name="Batalov S."/>
            <person name="Forrest A.R."/>
            <person name="Zavolan M."/>
            <person name="Davis M.J."/>
            <person name="Wilming L.G."/>
            <person name="Aidinis V."/>
            <person name="Allen J.E."/>
            <person name="Ambesi-Impiombato A."/>
            <person name="Apweiler R."/>
            <person name="Aturaliya R.N."/>
            <person name="Bailey T.L."/>
            <person name="Bansal M."/>
            <person name="Baxter L."/>
            <person name="Beisel K.W."/>
            <person name="Bersano T."/>
            <person name="Bono H."/>
            <person name="Chalk A.M."/>
            <person name="Chiu K.P."/>
            <person name="Choudhary V."/>
            <person name="Christoffels A."/>
            <person name="Clutterbuck D.R."/>
            <person name="Crowe M.L."/>
            <person name="Dalla E."/>
            <person name="Dalrymple B.P."/>
            <person name="de Bono B."/>
            <person name="Della Gatta G."/>
            <person name="di Bernardo D."/>
            <person name="Down T."/>
            <person name="Engstrom P."/>
            <person name="Fagiolini M."/>
            <person name="Faulkner G."/>
            <person name="Fletcher C.F."/>
            <person name="Fukushima T."/>
            <person name="Furuno M."/>
            <person name="Futaki S."/>
            <person name="Gariboldi M."/>
            <person name="Georgii-Hemming P."/>
            <person name="Gingeras T.R."/>
            <person name="Gojobori T."/>
            <person name="Green R.E."/>
            <person name="Gustincich S."/>
            <person name="Harbers M."/>
            <person name="Hayashi Y."/>
            <person name="Hensch T.K."/>
            <person name="Hirokawa N."/>
            <person name="Hill D."/>
            <person name="Huminiecki L."/>
            <person name="Iacono M."/>
            <person name="Ikeo K."/>
            <person name="Iwama A."/>
            <person name="Ishikawa T."/>
            <person name="Jakt M."/>
            <person name="Kanapin A."/>
            <person name="Katoh M."/>
            <person name="Kawasawa Y."/>
            <person name="Kelso J."/>
            <person name="Kitamura H."/>
            <person name="Kitano H."/>
            <person name="Kollias G."/>
            <person name="Krishnan S.P."/>
            <person name="Kruger A."/>
            <person name="Kummerfeld S.K."/>
            <person name="Kurochkin I.V."/>
            <person name="Lareau L.F."/>
            <person name="Lazarevic D."/>
            <person name="Lipovich L."/>
            <person name="Liu J."/>
            <person name="Liuni S."/>
            <person name="McWilliam S."/>
            <person name="Madan Babu M."/>
            <person name="Madera M."/>
            <person name="Marchionni L."/>
            <person name="Matsuda H."/>
            <person name="Matsuzawa S."/>
            <person name="Miki H."/>
            <person name="Mignone F."/>
            <person name="Miyake S."/>
            <person name="Morris K."/>
            <person name="Mottagui-Tabar S."/>
            <person name="Mulder N."/>
            <person name="Nakano N."/>
            <person name="Nakauchi H."/>
            <person name="Ng P."/>
            <person name="Nilsson R."/>
            <person name="Nishiguchi S."/>
            <person name="Nishikawa S."/>
            <person name="Nori F."/>
            <person name="Ohara O."/>
            <person name="Okazaki Y."/>
            <person name="Orlando V."/>
            <person name="Pang K.C."/>
            <person name="Pavan W.J."/>
            <person name="Pavesi G."/>
            <person name="Pesole G."/>
            <person name="Petrovsky N."/>
            <person name="Piazza S."/>
            <person name="Reed J."/>
            <person name="Reid J.F."/>
            <person name="Ring B.Z."/>
            <person name="Ringwald M."/>
            <person name="Rost B."/>
            <person name="Ruan Y."/>
            <person name="Salzberg S.L."/>
            <person name="Sandelin A."/>
            <person name="Schneider C."/>
            <person name="Schoenbach C."/>
            <person name="Sekiguchi K."/>
            <person name="Semple C.A."/>
            <person name="Seno S."/>
            <person name="Sessa L."/>
            <person name="Sheng Y."/>
            <person name="Shibata Y."/>
            <person name="Shimada H."/>
            <person name="Shimada K."/>
            <person name="Silva D."/>
            <person name="Sinclair B."/>
            <person name="Sperling S."/>
            <person name="Stupka E."/>
            <person name="Sugiura K."/>
            <person name="Sultana R."/>
            <person name="Takenaka Y."/>
            <person name="Taki K."/>
            <person name="Tammoja K."/>
            <person name="Tan S.L."/>
            <person name="Tang S."/>
            <person name="Taylor M.S."/>
            <person name="Tegner J."/>
            <person name="Teichmann S.A."/>
            <person name="Ueda H.R."/>
            <person name="van Nimwegen E."/>
            <person name="Verardo R."/>
            <person name="Wei C.L."/>
            <person name="Yagi K."/>
            <person name="Yamanishi H."/>
            <person name="Zabarovsky E."/>
            <person name="Zhu S."/>
            <person name="Zimmer A."/>
            <person name="Hide W."/>
            <person name="Bult C."/>
            <person name="Grimmond S.M."/>
            <person name="Teasdale R.D."/>
            <person name="Liu E.T."/>
            <person name="Brusic V."/>
            <person name="Quackenbush J."/>
            <person name="Wahlestedt C."/>
            <person name="Mattick J.S."/>
            <person name="Hume D.A."/>
            <person name="Kai C."/>
            <person name="Sasaki D."/>
            <person name="Tomaru Y."/>
            <person name="Fukuda S."/>
            <person name="Kanamori-Katayama M."/>
            <person name="Suzuki M."/>
            <person name="Aoki J."/>
            <person name="Arakawa T."/>
            <person name="Iida J."/>
            <person name="Imamura K."/>
            <person name="Itoh M."/>
            <person name="Kato T."/>
            <person name="Kawaji H."/>
            <person name="Kawagashira N."/>
            <person name="Kawashima T."/>
            <person name="Kojima M."/>
            <person name="Kondo S."/>
            <person name="Konno H."/>
            <person name="Nakano K."/>
            <person name="Ninomiya N."/>
            <person name="Nishio T."/>
            <person name="Okada M."/>
            <person name="Plessy C."/>
            <person name="Shibata K."/>
            <person name="Shiraki T."/>
            <person name="Suzuki S."/>
            <person name="Tagami M."/>
            <person name="Waki K."/>
            <person name="Watahiki A."/>
            <person name="Okamura-Oho Y."/>
            <person name="Suzuki H."/>
            <person name="Kawai J."/>
            <person name="Hayashizaki Y."/>
        </authorList>
    </citation>
    <scope>NUCLEOTIDE SEQUENCE [LARGE SCALE MRNA]</scope>
    <source>
        <strain>C57BL/6J</strain>
    </source>
</reference>
<reference key="2">
    <citation type="journal article" date="2009" name="PLoS Biol.">
        <title>Lineage-specific biology revealed by a finished genome assembly of the mouse.</title>
        <authorList>
            <person name="Church D.M."/>
            <person name="Goodstadt L."/>
            <person name="Hillier L.W."/>
            <person name="Zody M.C."/>
            <person name="Goldstein S."/>
            <person name="She X."/>
            <person name="Bult C.J."/>
            <person name="Agarwala R."/>
            <person name="Cherry J.L."/>
            <person name="DiCuccio M."/>
            <person name="Hlavina W."/>
            <person name="Kapustin Y."/>
            <person name="Meric P."/>
            <person name="Maglott D."/>
            <person name="Birtle Z."/>
            <person name="Marques A.C."/>
            <person name="Graves T."/>
            <person name="Zhou S."/>
            <person name="Teague B."/>
            <person name="Potamousis K."/>
            <person name="Churas C."/>
            <person name="Place M."/>
            <person name="Herschleb J."/>
            <person name="Runnheim R."/>
            <person name="Forrest D."/>
            <person name="Amos-Landgraf J."/>
            <person name="Schwartz D.C."/>
            <person name="Cheng Z."/>
            <person name="Lindblad-Toh K."/>
            <person name="Eichler E.E."/>
            <person name="Ponting C.P."/>
        </authorList>
    </citation>
    <scope>NUCLEOTIDE SEQUENCE [LARGE SCALE GENOMIC DNA]</scope>
    <source>
        <strain>C57BL/6J</strain>
    </source>
</reference>
<reference key="3">
    <citation type="journal article" date="2004" name="Genome Res.">
        <title>The status, quality, and expansion of the NIH full-length cDNA project: the Mammalian Gene Collection (MGC).</title>
        <authorList>
            <consortium name="The MGC Project Team"/>
        </authorList>
    </citation>
    <scope>NUCLEOTIDE SEQUENCE [LARGE SCALE MRNA]</scope>
    <source>
        <strain>C57BL/6J</strain>
        <tissue>Mammary gland</tissue>
    </source>
</reference>
<dbReference type="EMBL" id="AK010455">
    <property type="protein sequence ID" value="BAB26953.1"/>
    <property type="molecule type" value="mRNA"/>
</dbReference>
<dbReference type="EMBL" id="AL807825">
    <property type="status" value="NOT_ANNOTATED_CDS"/>
    <property type="molecule type" value="Genomic_DNA"/>
</dbReference>
<dbReference type="EMBL" id="BC039988">
    <property type="protein sequence ID" value="AAH39988.1"/>
    <property type="molecule type" value="mRNA"/>
</dbReference>
<dbReference type="CCDS" id="CCDS24381.1"/>
<dbReference type="RefSeq" id="NP_082298.1">
    <property type="nucleotide sequence ID" value="NM_028022.2"/>
</dbReference>
<dbReference type="SMR" id="Q9CWQ8"/>
<dbReference type="FunCoup" id="Q9CWQ8">
    <property type="interactions" value="161"/>
</dbReference>
<dbReference type="STRING" id="10090.ENSMUSP00000020699"/>
<dbReference type="PhosphoSitePlus" id="Q9CWQ8"/>
<dbReference type="SwissPalm" id="Q9CWQ8"/>
<dbReference type="PaxDb" id="10090-ENSMUSP00000020699"/>
<dbReference type="PeptideAtlas" id="Q9CWQ8"/>
<dbReference type="ProteomicsDB" id="265442"/>
<dbReference type="Antibodypedia" id="54095">
    <property type="antibodies" value="21 antibodies from 12 providers"/>
</dbReference>
<dbReference type="Ensembl" id="ENSMUST00000020699.4">
    <property type="protein sequence ID" value="ENSMUSP00000020699.4"/>
    <property type="gene ID" value="ENSMUSG00000020424.4"/>
</dbReference>
<dbReference type="GeneID" id="71962"/>
<dbReference type="KEGG" id="mmu:71962"/>
<dbReference type="UCSC" id="uc007hur.1">
    <property type="organism name" value="mouse"/>
</dbReference>
<dbReference type="AGR" id="MGI:1919212"/>
<dbReference type="CTD" id="652968"/>
<dbReference type="MGI" id="MGI:1919212">
    <property type="gene designation" value="Castor1"/>
</dbReference>
<dbReference type="VEuPathDB" id="HostDB:ENSMUSG00000020424"/>
<dbReference type="eggNOG" id="ENOG502QV83">
    <property type="taxonomic scope" value="Eukaryota"/>
</dbReference>
<dbReference type="GeneTree" id="ENSGT00390000006208"/>
<dbReference type="HOGENOM" id="CLU_057799_0_0_1"/>
<dbReference type="InParanoid" id="Q9CWQ8"/>
<dbReference type="OMA" id="HFTHPLI"/>
<dbReference type="OrthoDB" id="58529at2759"/>
<dbReference type="PhylomeDB" id="Q9CWQ8"/>
<dbReference type="TreeFam" id="TF331648"/>
<dbReference type="Reactome" id="R-MMU-9639288">
    <property type="pathway name" value="Amino acids regulate mTORC1"/>
</dbReference>
<dbReference type="BioGRID-ORCS" id="71962">
    <property type="hits" value="4 hits in 78 CRISPR screens"/>
</dbReference>
<dbReference type="PRO" id="PR:Q9CWQ8"/>
<dbReference type="Proteomes" id="UP000000589">
    <property type="component" value="Chromosome 11"/>
</dbReference>
<dbReference type="RNAct" id="Q9CWQ8">
    <property type="molecule type" value="protein"/>
</dbReference>
<dbReference type="Bgee" id="ENSMUSG00000020424">
    <property type="expression patterns" value="Expressed in ectoplacental cone and 194 other cell types or tissues"/>
</dbReference>
<dbReference type="GO" id="GO:0005829">
    <property type="term" value="C:cytosol"/>
    <property type="evidence" value="ECO:0000250"/>
    <property type="project" value="UniProtKB"/>
</dbReference>
<dbReference type="GO" id="GO:0061700">
    <property type="term" value="C:GATOR2 complex"/>
    <property type="evidence" value="ECO:0007669"/>
    <property type="project" value="Ensembl"/>
</dbReference>
<dbReference type="GO" id="GO:0034618">
    <property type="term" value="F:arginine binding"/>
    <property type="evidence" value="ECO:0000250"/>
    <property type="project" value="UniProtKB"/>
</dbReference>
<dbReference type="GO" id="GO:0042802">
    <property type="term" value="F:identical protein binding"/>
    <property type="evidence" value="ECO:0007669"/>
    <property type="project" value="Ensembl"/>
</dbReference>
<dbReference type="GO" id="GO:0140299">
    <property type="term" value="F:molecular sensor activity"/>
    <property type="evidence" value="ECO:0007669"/>
    <property type="project" value="Ensembl"/>
</dbReference>
<dbReference type="GO" id="GO:0140311">
    <property type="term" value="F:protein sequestering activity"/>
    <property type="evidence" value="ECO:0000250"/>
    <property type="project" value="UniProtKB"/>
</dbReference>
<dbReference type="GO" id="GO:0034198">
    <property type="term" value="P:cellular response to amino acid starvation"/>
    <property type="evidence" value="ECO:0007669"/>
    <property type="project" value="Ensembl"/>
</dbReference>
<dbReference type="GO" id="GO:1903577">
    <property type="term" value="P:cellular response to L-arginine"/>
    <property type="evidence" value="ECO:0000250"/>
    <property type="project" value="UniProtKB"/>
</dbReference>
<dbReference type="GO" id="GO:1904262">
    <property type="term" value="P:negative regulation of TORC1 signaling"/>
    <property type="evidence" value="ECO:0000250"/>
    <property type="project" value="UniProtKB"/>
</dbReference>
<dbReference type="GO" id="GO:1904263">
    <property type="term" value="P:positive regulation of TORC1 signaling"/>
    <property type="evidence" value="ECO:0007669"/>
    <property type="project" value="Ensembl"/>
</dbReference>
<dbReference type="FunFam" id="3.30.2130.10:FF:000003">
    <property type="entry name" value="Cytosolic arginine sensor for mTORC1 subunit 1"/>
    <property type="match status" value="1"/>
</dbReference>
<dbReference type="FunFam" id="3.30.2130.10:FF:000004">
    <property type="entry name" value="Cytosolic arginine sensor for mTORC1 subunit 1"/>
    <property type="match status" value="1"/>
</dbReference>
<dbReference type="Gene3D" id="3.30.2130.10">
    <property type="entry name" value="VC0802-like"/>
    <property type="match status" value="2"/>
</dbReference>
<dbReference type="InterPro" id="IPR045865">
    <property type="entry name" value="ACT-like_dom_sf"/>
</dbReference>
<dbReference type="InterPro" id="IPR049479">
    <property type="entry name" value="CASTOR1_ACT-like"/>
</dbReference>
<dbReference type="InterPro" id="IPR040778">
    <property type="entry name" value="CASTOR1_N"/>
</dbReference>
<dbReference type="InterPro" id="IPR027795">
    <property type="entry name" value="CASTOR_ACT_dom"/>
</dbReference>
<dbReference type="InterPro" id="IPR026249">
    <property type="entry name" value="CASTOR_fam"/>
</dbReference>
<dbReference type="InterPro" id="IPR051719">
    <property type="entry name" value="CASTOR_mTORC1"/>
</dbReference>
<dbReference type="PANTHER" id="PTHR31131">
    <property type="entry name" value="CHROMOSOME 1, WHOLE GENOME SHOTGUN SEQUENCE"/>
    <property type="match status" value="1"/>
</dbReference>
<dbReference type="PANTHER" id="PTHR31131:SF3">
    <property type="entry name" value="CYTOSOLIC ARGININE SENSOR FOR MTORC1 SUBUNIT 1"/>
    <property type="match status" value="1"/>
</dbReference>
<dbReference type="Pfam" id="PF13840">
    <property type="entry name" value="ACT_7"/>
    <property type="match status" value="2"/>
</dbReference>
<dbReference type="Pfam" id="PF21389">
    <property type="entry name" value="CASTOR1_ACT-like"/>
    <property type="match status" value="1"/>
</dbReference>
<dbReference type="Pfam" id="PF18700">
    <property type="entry name" value="Castor1_N"/>
    <property type="match status" value="1"/>
</dbReference>
<dbReference type="PRINTS" id="PR02078">
    <property type="entry name" value="GATSLIKEFMLY"/>
</dbReference>
<dbReference type="SUPFAM" id="SSF55021">
    <property type="entry name" value="ACT-like"/>
    <property type="match status" value="2"/>
</dbReference>
<proteinExistence type="evidence at transcript level"/>
<keyword id="KW-0963">Cytoplasm</keyword>
<keyword id="KW-0597">Phosphoprotein</keyword>
<keyword id="KW-1185">Reference proteome</keyword>
<keyword id="KW-0832">Ubl conjugation</keyword>
<evidence type="ECO:0000250" key="1">
    <source>
        <dbReference type="UniProtKB" id="Q8WTX7"/>
    </source>
</evidence>
<evidence type="ECO:0000305" key="2"/>
<evidence type="ECO:0000312" key="3">
    <source>
        <dbReference type="MGI" id="MGI:1919212"/>
    </source>
</evidence>
<accession>Q9CWQ8</accession>
<accession>Q29R56</accession>
<name>CAST1_MOUSE</name>
<comment type="function">
    <text evidence="1">Functions as an intracellular arginine sensor within the amino acid-sensing branch of the TORC1 signaling pathway. As a homodimer or a heterodimer with CASTOR2, binds and inhibits the GATOR subcomplex GATOR2 and thereby mTORC1. Binding of arginine to CASTOR1 allosterically disrupts the interaction of CASTOR1-containing dimers with GATOR2 which can in turn activate mTORC1 and the TORC1 signaling pathway.</text>
</comment>
<comment type="subunit">
    <text evidence="1">Forms homodimers and heterodimers with CASTOR2 (By similarity). Interacts with the GATOR2 complex which is composed of MIOS, SEC13, SEH1L, WDR24 and WDR59; the interaction is negatively regulated by arginine (By similarity). Interacts with TM4SF5; the interaction is positively regulated by leucine and is negatively regulated by arginine (By similarity).</text>
</comment>
<comment type="subcellular location">
    <subcellularLocation>
        <location evidence="1">Cytoplasm</location>
        <location evidence="1">Cytosol</location>
    </subcellularLocation>
</comment>
<comment type="domain">
    <text evidence="1">Based on x-ray crystallography data, the protein would be constituted of 4 tandem ACT domains instead of the 2 predicted from the sequence.</text>
</comment>
<comment type="PTM">
    <text evidence="1">Phosphorylation at Ser-14 by AKT1, promoting the interaction between CASTOR1 and RNF167.</text>
</comment>
<comment type="PTM">
    <text evidence="1">Ubiquitinated by RNF167 via 'Lys-29'-polyubiquitination, leading to its degradation, releasing the GATOR2 complex. Ubiquitination by RNF167 is promoted by phosphorylation at Ser-14 by AKT1.</text>
</comment>
<comment type="similarity">
    <text evidence="2">Belongs to the GATS family.</text>
</comment>
<organism>
    <name type="scientific">Mus musculus</name>
    <name type="common">Mouse</name>
    <dbReference type="NCBI Taxonomy" id="10090"/>
    <lineage>
        <taxon>Eukaryota</taxon>
        <taxon>Metazoa</taxon>
        <taxon>Chordata</taxon>
        <taxon>Craniata</taxon>
        <taxon>Vertebrata</taxon>
        <taxon>Euteleostomi</taxon>
        <taxon>Mammalia</taxon>
        <taxon>Eutheria</taxon>
        <taxon>Euarchontoglires</taxon>
        <taxon>Glires</taxon>
        <taxon>Rodentia</taxon>
        <taxon>Myomorpha</taxon>
        <taxon>Muroidea</taxon>
        <taxon>Muridae</taxon>
        <taxon>Murinae</taxon>
        <taxon>Mus</taxon>
        <taxon>Mus</taxon>
    </lineage>
</organism>
<feature type="chain" id="PRO_0000348591" description="Cytosolic arginine sensor for mTORC1 subunit 1">
    <location>
        <begin position="1"/>
        <end position="331"/>
    </location>
</feature>
<feature type="domain" description="ACT 1">
    <location>
        <begin position="72"/>
        <end position="137"/>
    </location>
</feature>
<feature type="domain" description="ACT 2">
    <location>
        <begin position="259"/>
        <end position="320"/>
    </location>
</feature>
<feature type="binding site" evidence="1">
    <location>
        <begin position="110"/>
        <end position="111"/>
    </location>
    <ligand>
        <name>L-arginine</name>
        <dbReference type="ChEBI" id="CHEBI:32682"/>
    </ligand>
</feature>
<feature type="binding site" evidence="1">
    <location>
        <position position="273"/>
    </location>
    <ligand>
        <name>L-arginine</name>
        <dbReference type="ChEBI" id="CHEBI:32682"/>
    </ligand>
</feature>
<feature type="binding site" evidence="1">
    <location>
        <begin position="279"/>
        <end position="280"/>
    </location>
    <ligand>
        <name>L-arginine</name>
        <dbReference type="ChEBI" id="CHEBI:32682"/>
    </ligand>
</feature>
<feature type="binding site" evidence="1">
    <location>
        <begin position="299"/>
        <end position="303"/>
    </location>
    <ligand>
        <name>L-arginine</name>
        <dbReference type="ChEBI" id="CHEBI:32682"/>
    </ligand>
</feature>
<feature type="modified residue" description="Phosphoserine" evidence="1">
    <location>
        <position position="14"/>
    </location>
</feature>
<sequence>MELHILEHRVRVLSIARPGLWLYTHPLIKLLFLPCRSRCKFFSLTETPEDYTLMVDEEGFKELPPSEFLQVAEATWLVMNVSHSGSVVQAAGVTKIARSVIAPLAEHHVSVLMLSTYQTDFILVREQDLSVVIHTLAQEFQIYREVGGEPVPVTGDDSSNGFPQIQHGPSPTVHPIQSPQNRFCVLTLDPETLPAVATTLIDVLFYSHSVPKEAASGGPESTSIPFFAFSLIEGYISIVMDAEIQRKFPSDLLLTSSSGELWRMVRIGGQPLGFDECGIVAQIAGPLAAVDISAYYISTFNFDHALVPEDEIGCVIDILQRRQESQASKDP</sequence>
<gene>
    <name evidence="1" type="primary">Castor1</name>
    <name evidence="3" type="synonym">Gatsl3</name>
</gene>
<protein>
    <recommendedName>
        <fullName evidence="1">Cytosolic arginine sensor for mTORC1 subunit 1</fullName>
    </recommendedName>
    <alternativeName>
        <fullName evidence="2">GATS-like protein 3</fullName>
    </alternativeName>
</protein>